<accession>O67323</accession>
<reference key="1">
    <citation type="journal article" date="1998" name="Nature">
        <title>The complete genome of the hyperthermophilic bacterium Aquifex aeolicus.</title>
        <authorList>
            <person name="Deckert G."/>
            <person name="Warren P.V."/>
            <person name="Gaasterland T."/>
            <person name="Young W.G."/>
            <person name="Lenox A.L."/>
            <person name="Graham D.E."/>
            <person name="Overbeek R."/>
            <person name="Snead M.A."/>
            <person name="Keller M."/>
            <person name="Aujay M."/>
            <person name="Huber R."/>
            <person name="Feldman R.A."/>
            <person name="Short J.M."/>
            <person name="Olsen G.J."/>
            <person name="Swanson R.V."/>
        </authorList>
    </citation>
    <scope>NUCLEOTIDE SEQUENCE [LARGE SCALE GENOMIC DNA]</scope>
    <source>
        <strain>VF5</strain>
    </source>
</reference>
<reference key="2">
    <citation type="journal article" date="2005" name="Proc. Natl. Acad. Sci. U.S.A.">
        <title>Breaking sieve for steric exclusion of a noncognate amino acid from active site of a tRNA synthetase.</title>
        <authorList>
            <person name="Swairjo M.A."/>
            <person name="Schimmel P.R."/>
        </authorList>
    </citation>
    <scope>X-RAY CRYSTALLOGRAPHY (2.08 ANGSTROMS) OF 1-454 WITH SUBSTRATES OR WITH ATP</scope>
</reference>
<reference key="3">
    <citation type="journal article" date="2009" name="Science">
        <title>The C-Ala domain brings together editing and aminoacylation functions on one tRNA.</title>
        <authorList>
            <person name="Guo M."/>
            <person name="Chong Y.E."/>
            <person name="Beebe K."/>
            <person name="Shapiro R."/>
            <person name="Yang X.-L."/>
            <person name="Schimmel P."/>
        </authorList>
    </citation>
    <scope>DOMAIN EXCHANGE EXPERIMENTS</scope>
    <scope>X-RAY CRYSTALLOGRAPHY (1.85 ANGSTROMS) OF 758-867</scope>
</reference>
<proteinExistence type="evidence at protein level"/>
<comment type="function">
    <text evidence="1">Catalyzes the attachment of alanine to tRNA(Ala) in a two-step reaction: alanine is first activated by ATP to form Ala-AMP and then transferred to the acceptor end of tRNA(Ala). Also edits incorrectly charged Ser-tRNA(Ala) and Gly-tRNA(Ala) via its editing domain.</text>
</comment>
<comment type="catalytic activity">
    <reaction evidence="1">
        <text>tRNA(Ala) + L-alanine + ATP = L-alanyl-tRNA(Ala) + AMP + diphosphate</text>
        <dbReference type="Rhea" id="RHEA:12540"/>
        <dbReference type="Rhea" id="RHEA-COMP:9657"/>
        <dbReference type="Rhea" id="RHEA-COMP:9923"/>
        <dbReference type="ChEBI" id="CHEBI:30616"/>
        <dbReference type="ChEBI" id="CHEBI:33019"/>
        <dbReference type="ChEBI" id="CHEBI:57972"/>
        <dbReference type="ChEBI" id="CHEBI:78442"/>
        <dbReference type="ChEBI" id="CHEBI:78497"/>
        <dbReference type="ChEBI" id="CHEBI:456215"/>
        <dbReference type="EC" id="6.1.1.7"/>
    </reaction>
</comment>
<comment type="cofactor">
    <cofactor evidence="1">
        <name>Zn(2+)</name>
        <dbReference type="ChEBI" id="CHEBI:29105"/>
    </cofactor>
    <text evidence="1">Binds 1 zinc ion per subunit.</text>
</comment>
<comment type="subcellular location">
    <subcellularLocation>
        <location>Cytoplasm</location>
    </subcellularLocation>
</comment>
<comment type="domain">
    <text evidence="1 2">Consists of three domains; the N-terminal catalytic domain, the editing domain and the C-terminal C-Ala domain. The editing domain removes incorrectly charged amino acids, while the C-Ala domain, along with tRNA(Ala), serves as a bridge to cooperatively bring together the editing and aminoacylation centers thus stimulating deacylation of misacylated tRNAs. The Aquifex aeolicus domain can be used in vitro to replace the corresponding domain in E.coli.</text>
</comment>
<comment type="similarity">
    <text evidence="1">Belongs to the class-II aminoacyl-tRNA synthetase family.</text>
</comment>
<protein>
    <recommendedName>
        <fullName evidence="1">Alanine--tRNA ligase</fullName>
        <ecNumber evidence="1">6.1.1.7</ecNumber>
    </recommendedName>
    <alternativeName>
        <fullName evidence="1">Alanyl-tRNA synthetase</fullName>
        <shortName evidence="1">AlaRS</shortName>
    </alternativeName>
</protein>
<keyword id="KW-0002">3D-structure</keyword>
<keyword id="KW-0030">Aminoacyl-tRNA synthetase</keyword>
<keyword id="KW-0067">ATP-binding</keyword>
<keyword id="KW-0963">Cytoplasm</keyword>
<keyword id="KW-0436">Ligase</keyword>
<keyword id="KW-0479">Metal-binding</keyword>
<keyword id="KW-0547">Nucleotide-binding</keyword>
<keyword id="KW-0648">Protein biosynthesis</keyword>
<keyword id="KW-1185">Reference proteome</keyword>
<keyword id="KW-0694">RNA-binding</keyword>
<keyword id="KW-0820">tRNA-binding</keyword>
<keyword id="KW-0862">Zinc</keyword>
<name>SYA_AQUAE</name>
<gene>
    <name evidence="1" type="primary">alaS</name>
    <name type="ordered locus">aq_1293</name>
</gene>
<dbReference type="EC" id="6.1.1.7" evidence="1"/>
<dbReference type="EMBL" id="AE000657">
    <property type="protein sequence ID" value="AAC07289.1"/>
    <property type="molecule type" value="Genomic_DNA"/>
</dbReference>
<dbReference type="PIR" id="H70411">
    <property type="entry name" value="H70411"/>
</dbReference>
<dbReference type="RefSeq" id="NP_213887.1">
    <property type="nucleotide sequence ID" value="NC_000918.1"/>
</dbReference>
<dbReference type="RefSeq" id="WP_010880825.1">
    <property type="nucleotide sequence ID" value="NC_000918.1"/>
</dbReference>
<dbReference type="PDB" id="1RIQ">
    <property type="method" value="X-ray"/>
    <property type="resolution" value="2.14 A"/>
    <property type="chains" value="A=1-454"/>
</dbReference>
<dbReference type="PDB" id="1YFR">
    <property type="method" value="X-ray"/>
    <property type="resolution" value="2.15 A"/>
    <property type="chains" value="A/B=1-454"/>
</dbReference>
<dbReference type="PDB" id="1YFS">
    <property type="method" value="X-ray"/>
    <property type="resolution" value="2.08 A"/>
    <property type="chains" value="A/B=1-454"/>
</dbReference>
<dbReference type="PDB" id="1YFT">
    <property type="method" value="X-ray"/>
    <property type="resolution" value="2.23 A"/>
    <property type="chains" value="A=1-454"/>
</dbReference>
<dbReference type="PDB" id="1YGB">
    <property type="method" value="X-ray"/>
    <property type="resolution" value="2.48 A"/>
    <property type="chains" value="A=1-454"/>
</dbReference>
<dbReference type="PDB" id="3G98">
    <property type="method" value="X-ray"/>
    <property type="resolution" value="1.85 A"/>
    <property type="chains" value="A/B=758-867"/>
</dbReference>
<dbReference type="PDB" id="3HTZ">
    <property type="method" value="X-ray"/>
    <property type="resolution" value="2.50 A"/>
    <property type="chains" value="A=2-454"/>
</dbReference>
<dbReference type="PDBsum" id="1RIQ"/>
<dbReference type="PDBsum" id="1YFR"/>
<dbReference type="PDBsum" id="1YFS"/>
<dbReference type="PDBsum" id="1YFT"/>
<dbReference type="PDBsum" id="1YGB"/>
<dbReference type="PDBsum" id="3G98"/>
<dbReference type="PDBsum" id="3HTZ"/>
<dbReference type="SMR" id="O67323"/>
<dbReference type="FunCoup" id="O67323">
    <property type="interactions" value="459"/>
</dbReference>
<dbReference type="STRING" id="224324.aq_1293"/>
<dbReference type="EnsemblBacteria" id="AAC07289">
    <property type="protein sequence ID" value="AAC07289"/>
    <property type="gene ID" value="aq_1293"/>
</dbReference>
<dbReference type="KEGG" id="aae:aq_1293"/>
<dbReference type="PATRIC" id="fig|224324.8.peg.1011"/>
<dbReference type="eggNOG" id="COG0013">
    <property type="taxonomic scope" value="Bacteria"/>
</dbReference>
<dbReference type="HOGENOM" id="CLU_004485_1_1_0"/>
<dbReference type="InParanoid" id="O67323"/>
<dbReference type="OrthoDB" id="9803884at2"/>
<dbReference type="BRENDA" id="6.1.1.7">
    <property type="organism ID" value="396"/>
</dbReference>
<dbReference type="EvolutionaryTrace" id="O67323"/>
<dbReference type="Proteomes" id="UP000000798">
    <property type="component" value="Chromosome"/>
</dbReference>
<dbReference type="GO" id="GO:0005829">
    <property type="term" value="C:cytosol"/>
    <property type="evidence" value="ECO:0000318"/>
    <property type="project" value="GO_Central"/>
</dbReference>
<dbReference type="GO" id="GO:0004813">
    <property type="term" value="F:alanine-tRNA ligase activity"/>
    <property type="evidence" value="ECO:0000318"/>
    <property type="project" value="GO_Central"/>
</dbReference>
<dbReference type="GO" id="GO:0002161">
    <property type="term" value="F:aminoacyl-tRNA deacylase activity"/>
    <property type="evidence" value="ECO:0000318"/>
    <property type="project" value="GO_Central"/>
</dbReference>
<dbReference type="GO" id="GO:0005524">
    <property type="term" value="F:ATP binding"/>
    <property type="evidence" value="ECO:0007669"/>
    <property type="project" value="UniProtKB-UniRule"/>
</dbReference>
<dbReference type="GO" id="GO:0000049">
    <property type="term" value="F:tRNA binding"/>
    <property type="evidence" value="ECO:0007669"/>
    <property type="project" value="UniProtKB-KW"/>
</dbReference>
<dbReference type="GO" id="GO:0008270">
    <property type="term" value="F:zinc ion binding"/>
    <property type="evidence" value="ECO:0007669"/>
    <property type="project" value="UniProtKB-UniRule"/>
</dbReference>
<dbReference type="GO" id="GO:0006419">
    <property type="term" value="P:alanyl-tRNA aminoacylation"/>
    <property type="evidence" value="ECO:0000318"/>
    <property type="project" value="GO_Central"/>
</dbReference>
<dbReference type="CDD" id="cd00673">
    <property type="entry name" value="AlaRS_core"/>
    <property type="match status" value="1"/>
</dbReference>
<dbReference type="FunFam" id="2.40.30.130:FF:000001">
    <property type="entry name" value="Alanine--tRNA ligase"/>
    <property type="match status" value="1"/>
</dbReference>
<dbReference type="FunFam" id="3.10.310.40:FF:000001">
    <property type="entry name" value="Alanine--tRNA ligase"/>
    <property type="match status" value="1"/>
</dbReference>
<dbReference type="FunFam" id="3.30.54.20:FF:000001">
    <property type="entry name" value="Alanine--tRNA ligase"/>
    <property type="match status" value="1"/>
</dbReference>
<dbReference type="FunFam" id="3.30.930.10:FF:000004">
    <property type="entry name" value="Alanine--tRNA ligase"/>
    <property type="match status" value="1"/>
</dbReference>
<dbReference type="FunFam" id="3.30.980.10:FF:000004">
    <property type="entry name" value="Alanine--tRNA ligase, cytoplasmic"/>
    <property type="match status" value="1"/>
</dbReference>
<dbReference type="Gene3D" id="2.40.30.130">
    <property type="match status" value="1"/>
</dbReference>
<dbReference type="Gene3D" id="3.10.310.40">
    <property type="match status" value="1"/>
</dbReference>
<dbReference type="Gene3D" id="3.30.54.20">
    <property type="match status" value="1"/>
</dbReference>
<dbReference type="Gene3D" id="6.10.250.550">
    <property type="match status" value="1"/>
</dbReference>
<dbReference type="Gene3D" id="3.30.930.10">
    <property type="entry name" value="Bira Bifunctional Protein, Domain 2"/>
    <property type="match status" value="1"/>
</dbReference>
<dbReference type="Gene3D" id="3.30.980.10">
    <property type="entry name" value="Threonyl-trna Synthetase, Chain A, domain 2"/>
    <property type="match status" value="1"/>
</dbReference>
<dbReference type="HAMAP" id="MF_00036_B">
    <property type="entry name" value="Ala_tRNA_synth_B"/>
    <property type="match status" value="1"/>
</dbReference>
<dbReference type="InterPro" id="IPR045864">
    <property type="entry name" value="aa-tRNA-synth_II/BPL/LPL"/>
</dbReference>
<dbReference type="InterPro" id="IPR002318">
    <property type="entry name" value="Ala-tRNA-lgiase_IIc"/>
</dbReference>
<dbReference type="InterPro" id="IPR018162">
    <property type="entry name" value="Ala-tRNA-ligase_IIc_anticod-bd"/>
</dbReference>
<dbReference type="InterPro" id="IPR018165">
    <property type="entry name" value="Ala-tRNA-synth_IIc_core"/>
</dbReference>
<dbReference type="InterPro" id="IPR018164">
    <property type="entry name" value="Ala-tRNA-synth_IIc_N"/>
</dbReference>
<dbReference type="InterPro" id="IPR050058">
    <property type="entry name" value="Ala-tRNA_ligase"/>
</dbReference>
<dbReference type="InterPro" id="IPR023033">
    <property type="entry name" value="Ala_tRNA_ligase_euk/bac"/>
</dbReference>
<dbReference type="InterPro" id="IPR003156">
    <property type="entry name" value="DHHA1_dom"/>
</dbReference>
<dbReference type="InterPro" id="IPR018163">
    <property type="entry name" value="Thr/Ala-tRNA-synth_IIc_edit"/>
</dbReference>
<dbReference type="InterPro" id="IPR009000">
    <property type="entry name" value="Transl_B-barrel_sf"/>
</dbReference>
<dbReference type="InterPro" id="IPR012947">
    <property type="entry name" value="tRNA_SAD"/>
</dbReference>
<dbReference type="NCBIfam" id="TIGR00344">
    <property type="entry name" value="alaS"/>
    <property type="match status" value="1"/>
</dbReference>
<dbReference type="PANTHER" id="PTHR11777:SF9">
    <property type="entry name" value="ALANINE--TRNA LIGASE, CYTOPLASMIC"/>
    <property type="match status" value="1"/>
</dbReference>
<dbReference type="PANTHER" id="PTHR11777">
    <property type="entry name" value="ALANYL-TRNA SYNTHETASE"/>
    <property type="match status" value="1"/>
</dbReference>
<dbReference type="Pfam" id="PF02272">
    <property type="entry name" value="DHHA1"/>
    <property type="match status" value="1"/>
</dbReference>
<dbReference type="Pfam" id="PF01411">
    <property type="entry name" value="tRNA-synt_2c"/>
    <property type="match status" value="1"/>
</dbReference>
<dbReference type="Pfam" id="PF07973">
    <property type="entry name" value="tRNA_SAD"/>
    <property type="match status" value="1"/>
</dbReference>
<dbReference type="PRINTS" id="PR00980">
    <property type="entry name" value="TRNASYNTHALA"/>
</dbReference>
<dbReference type="SMART" id="SM00863">
    <property type="entry name" value="tRNA_SAD"/>
    <property type="match status" value="1"/>
</dbReference>
<dbReference type="SUPFAM" id="SSF55681">
    <property type="entry name" value="Class II aaRS and biotin synthetases"/>
    <property type="match status" value="1"/>
</dbReference>
<dbReference type="SUPFAM" id="SSF101353">
    <property type="entry name" value="Putative anticodon-binding domain of alanyl-tRNA synthetase (AlaRS)"/>
    <property type="match status" value="1"/>
</dbReference>
<dbReference type="SUPFAM" id="SSF55186">
    <property type="entry name" value="ThrRS/AlaRS common domain"/>
    <property type="match status" value="1"/>
</dbReference>
<dbReference type="SUPFAM" id="SSF50447">
    <property type="entry name" value="Translation proteins"/>
    <property type="match status" value="1"/>
</dbReference>
<dbReference type="PROSITE" id="PS50860">
    <property type="entry name" value="AA_TRNA_LIGASE_II_ALA"/>
    <property type="match status" value="1"/>
</dbReference>
<evidence type="ECO:0000255" key="1">
    <source>
        <dbReference type="HAMAP-Rule" id="MF_00036"/>
    </source>
</evidence>
<evidence type="ECO:0000269" key="2">
    <source>
    </source>
</evidence>
<evidence type="ECO:0007829" key="3">
    <source>
        <dbReference type="PDB" id="1RIQ"/>
    </source>
</evidence>
<evidence type="ECO:0007829" key="4">
    <source>
        <dbReference type="PDB" id="1YFR"/>
    </source>
</evidence>
<evidence type="ECO:0007829" key="5">
    <source>
        <dbReference type="PDB" id="1YFS"/>
    </source>
</evidence>
<evidence type="ECO:0007829" key="6">
    <source>
        <dbReference type="PDB" id="1YGB"/>
    </source>
</evidence>
<evidence type="ECO:0007829" key="7">
    <source>
        <dbReference type="PDB" id="3G98"/>
    </source>
</evidence>
<evidence type="ECO:0007829" key="8">
    <source>
        <dbReference type="PDB" id="3HTZ"/>
    </source>
</evidence>
<organism>
    <name type="scientific">Aquifex aeolicus (strain VF5)</name>
    <dbReference type="NCBI Taxonomy" id="224324"/>
    <lineage>
        <taxon>Bacteria</taxon>
        <taxon>Pseudomonadati</taxon>
        <taxon>Aquificota</taxon>
        <taxon>Aquificia</taxon>
        <taxon>Aquificales</taxon>
        <taxon>Aquificaceae</taxon>
        <taxon>Aquifex</taxon>
    </lineage>
</organism>
<feature type="chain" id="PRO_0000075047" description="Alanine--tRNA ligase">
    <location>
        <begin position="1"/>
        <end position="867"/>
    </location>
</feature>
<feature type="binding site" evidence="1">
    <location>
        <position position="559"/>
    </location>
    <ligand>
        <name>Zn(2+)</name>
        <dbReference type="ChEBI" id="CHEBI:29105"/>
    </ligand>
</feature>
<feature type="binding site" evidence="1">
    <location>
        <position position="563"/>
    </location>
    <ligand>
        <name>Zn(2+)</name>
        <dbReference type="ChEBI" id="CHEBI:29105"/>
    </ligand>
</feature>
<feature type="binding site" evidence="1">
    <location>
        <position position="661"/>
    </location>
    <ligand>
        <name>Zn(2+)</name>
        <dbReference type="ChEBI" id="CHEBI:29105"/>
    </ligand>
</feature>
<feature type="binding site" evidence="1">
    <location>
        <position position="665"/>
    </location>
    <ligand>
        <name>Zn(2+)</name>
        <dbReference type="ChEBI" id="CHEBI:29105"/>
    </ligand>
</feature>
<feature type="helix" evidence="5">
    <location>
        <begin position="5"/>
        <end position="17"/>
    </location>
</feature>
<feature type="turn" evidence="5">
    <location>
        <begin position="18"/>
        <end position="20"/>
    </location>
</feature>
<feature type="strand" evidence="4">
    <location>
        <begin position="22"/>
        <end position="24"/>
    </location>
</feature>
<feature type="helix" evidence="3">
    <location>
        <begin position="45"/>
        <end position="47"/>
    </location>
</feature>
<feature type="helix" evidence="5">
    <location>
        <begin position="48"/>
        <end position="51"/>
    </location>
</feature>
<feature type="strand" evidence="5">
    <location>
        <begin position="60"/>
        <end position="69"/>
    </location>
</feature>
<feature type="helix" evidence="5">
    <location>
        <begin position="78"/>
        <end position="80"/>
    </location>
</feature>
<feature type="turn" evidence="8">
    <location>
        <begin position="81"/>
        <end position="83"/>
    </location>
</feature>
<feature type="strand" evidence="5">
    <location>
        <begin position="84"/>
        <end position="86"/>
    </location>
</feature>
<feature type="strand" evidence="5">
    <location>
        <begin position="89"/>
        <end position="101"/>
    </location>
</feature>
<feature type="helix" evidence="5">
    <location>
        <begin position="104"/>
        <end position="117"/>
    </location>
</feature>
<feature type="helix" evidence="5">
    <location>
        <begin position="123"/>
        <end position="125"/>
    </location>
</feature>
<feature type="strand" evidence="5">
    <location>
        <begin position="126"/>
        <end position="131"/>
    </location>
</feature>
<feature type="helix" evidence="5">
    <location>
        <begin position="135"/>
        <end position="142"/>
    </location>
</feature>
<feature type="turn" evidence="5">
    <location>
        <begin position="143"/>
        <end position="145"/>
    </location>
</feature>
<feature type="helix" evidence="5">
    <location>
        <begin position="149"/>
        <end position="151"/>
    </location>
</feature>
<feature type="strand" evidence="5">
    <location>
        <begin position="152"/>
        <end position="155"/>
    </location>
</feature>
<feature type="helix" evidence="5">
    <location>
        <begin position="157"/>
        <end position="160"/>
    </location>
</feature>
<feature type="strand" evidence="5">
    <location>
        <begin position="161"/>
        <end position="179"/>
    </location>
</feature>
<feature type="strand" evidence="6">
    <location>
        <begin position="182"/>
        <end position="184"/>
    </location>
</feature>
<feature type="helix" evidence="5">
    <location>
        <begin position="186"/>
        <end position="189"/>
    </location>
</feature>
<feature type="strand" evidence="5">
    <location>
        <begin position="190"/>
        <end position="203"/>
    </location>
</feature>
<feature type="strand" evidence="6">
    <location>
        <begin position="205"/>
        <end position="207"/>
    </location>
</feature>
<feature type="strand" evidence="5">
    <location>
        <begin position="209"/>
        <end position="222"/>
    </location>
</feature>
<feature type="helix" evidence="5">
    <location>
        <begin position="223"/>
        <end position="230"/>
    </location>
</feature>
<feature type="helix" evidence="5">
    <location>
        <begin position="236"/>
        <end position="238"/>
    </location>
</feature>
<feature type="turn" evidence="5">
    <location>
        <begin position="240"/>
        <end position="242"/>
    </location>
</feature>
<feature type="helix" evidence="5">
    <location>
        <begin position="243"/>
        <end position="253"/>
    </location>
</feature>
<feature type="strand" evidence="4">
    <location>
        <begin position="257"/>
        <end position="259"/>
    </location>
</feature>
<feature type="helix" evidence="5">
    <location>
        <begin position="261"/>
        <end position="282"/>
    </location>
</feature>
<feature type="helix" evidence="5">
    <location>
        <begin position="291"/>
        <end position="309"/>
    </location>
</feature>
<feature type="helix" evidence="5">
    <location>
        <begin position="317"/>
        <end position="328"/>
    </location>
</feature>
<feature type="turn" evidence="5">
    <location>
        <begin position="329"/>
        <end position="331"/>
    </location>
</feature>
<feature type="helix" evidence="5">
    <location>
        <begin position="334"/>
        <end position="373"/>
    </location>
</feature>
<feature type="strand" evidence="4">
    <location>
        <begin position="377"/>
        <end position="379"/>
    </location>
</feature>
<feature type="helix" evidence="5">
    <location>
        <begin position="381"/>
        <end position="389"/>
    </location>
</feature>
<feature type="helix" evidence="5">
    <location>
        <begin position="395"/>
        <end position="403"/>
    </location>
</feature>
<feature type="turn" evidence="5">
    <location>
        <begin position="404"/>
        <end position="406"/>
    </location>
</feature>
<feature type="helix" evidence="5">
    <location>
        <begin position="411"/>
        <end position="423"/>
    </location>
</feature>
<feature type="turn" evidence="5">
    <location>
        <begin position="424"/>
        <end position="426"/>
    </location>
</feature>
<feature type="strand" evidence="6">
    <location>
        <begin position="443"/>
        <end position="445"/>
    </location>
</feature>
<feature type="helix" evidence="5">
    <location>
        <begin position="446"/>
        <end position="449"/>
    </location>
</feature>
<feature type="turn" evidence="3">
    <location>
        <begin position="450"/>
        <end position="452"/>
    </location>
</feature>
<feature type="strand" evidence="7">
    <location>
        <begin position="758"/>
        <end position="762"/>
    </location>
</feature>
<feature type="strand" evidence="7">
    <location>
        <begin position="765"/>
        <end position="774"/>
    </location>
</feature>
<feature type="helix" evidence="7">
    <location>
        <begin position="777"/>
        <end position="787"/>
    </location>
</feature>
<feature type="strand" evidence="7">
    <location>
        <begin position="790"/>
        <end position="802"/>
    </location>
</feature>
<feature type="strand" evidence="7">
    <location>
        <begin position="805"/>
        <end position="812"/>
    </location>
</feature>
<feature type="helix" evidence="7">
    <location>
        <begin position="814"/>
        <end position="816"/>
    </location>
</feature>
<feature type="turn" evidence="7">
    <location>
        <begin position="817"/>
        <end position="819"/>
    </location>
</feature>
<feature type="helix" evidence="7">
    <location>
        <begin position="822"/>
        <end position="832"/>
    </location>
</feature>
<feature type="strand" evidence="7">
    <location>
        <begin position="841"/>
        <end position="849"/>
    </location>
</feature>
<feature type="helix" evidence="7">
    <location>
        <begin position="851"/>
        <end position="853"/>
    </location>
</feature>
<feature type="helix" evidence="7">
    <location>
        <begin position="854"/>
        <end position="866"/>
    </location>
</feature>
<sequence length="867" mass="98436">MSLSAHEIRELFLSFFEKKGHTRVKSAPLVPENDPTLLFVNAGMVPFKNVFLGLEKRPYKRATSCQKCLRVSGKHNDLEQVGYTSRHHTFFEMLGNFSFGDYFKKEAIEYAWEFVTEVLKLPKEKLYVSVYKDDEEAYRIWNEHIGIPSERIWRLGEEDNFWQMGDVGPCGPSSEIYVDRGEEYEGDERYLEIWNLVFMQYNRDENGVLTPLPHPNIDTGMGLERIASVLQGKNSNFEIDIIFPLIQFGEEVSGKKYGEKFETDVALRVIADHLRAITFAISDGVIPSNEGRGYVIRRILRRAMRFGYKLGIENPFLYKGVDLVVDIMKEPYPELELSREFVKGIVKGEEKRFIKTLKAGMEYIQEVIQKALEEGRKTLSGKEVFTAYDTYGFPVDLIDEIAREKGLGIDLEGFQCELEEQRERARKHFKVEAKKVKPVYSHLKELGKTSAFVGYEHMEWESQVVGLVKGEGLVSELKEGEEGEVVLKETPFYPEGGGQIGDAGIIESDKALFKVEDTQKPTEGIIVHIGKVLKGTLKVGDTVHARVDKERRWDIMRNHTATHLLHAALRNVLGEHVRQAGSLVADKYLRFDFTHFSALTEEELKRVEELVNEKIRENLPVNVMEMAYDEALKTGAIAIFEEKYGERVRVISCGEFSKELCGGTHVSATGDIGYFKIISESSVGAGVRRIVAQTGRWSVETAFKEHQTLKKASSALGVGEEEVIQKIEELKEEIKDREREIQRLKQELLKLQIREVVKEENVGDFTLHYGVFEEVEPEELRNLADMLRQRTKKDVVFIASRKGDKINFVIGVSKEISDKVNAKEVIREVGKVLKGGGGGRADLAQGGGKAPDKFPEAVKLLKEILSG</sequence>